<comment type="similarity">
    <text evidence="1">Belongs to the bacterial ribosomal protein bL33 family.</text>
</comment>
<protein>
    <recommendedName>
        <fullName evidence="1">Large ribosomal subunit protein bL33</fullName>
    </recommendedName>
    <alternativeName>
        <fullName evidence="2">50S ribosomal protein L33</fullName>
    </alternativeName>
</protein>
<reference key="1">
    <citation type="journal article" date="2008" name="Science">
        <title>Genome of an endosymbiont coupling N2 fixation to cellulolysis within RT protist cells in termite gut.</title>
        <authorList>
            <person name="Hongoh Y."/>
            <person name="Sharma V.K."/>
            <person name="Prakash T."/>
            <person name="Noda S."/>
            <person name="Toh H."/>
            <person name="Taylor T.D."/>
            <person name="Kudo T."/>
            <person name="Sakaki Y."/>
            <person name="Toyoda A."/>
            <person name="Hattori M."/>
            <person name="Ohkuma M."/>
        </authorList>
    </citation>
    <scope>NUCLEOTIDE SEQUENCE [LARGE SCALE GENOMIC DNA]</scope>
</reference>
<feature type="chain" id="PRO_1000115093" description="Large ribosomal subunit protein bL33">
    <location>
        <begin position="1"/>
        <end position="62"/>
    </location>
</feature>
<name>RL33_AZOPC</name>
<gene>
    <name evidence="1" type="primary">rpmG</name>
    <name type="ordered locus">CFPG_125</name>
</gene>
<evidence type="ECO:0000255" key="1">
    <source>
        <dbReference type="HAMAP-Rule" id="MF_00294"/>
    </source>
</evidence>
<evidence type="ECO:0000305" key="2"/>
<dbReference type="EMBL" id="AP010656">
    <property type="protein sequence ID" value="BAG83388.1"/>
    <property type="molecule type" value="Genomic_DNA"/>
</dbReference>
<dbReference type="RefSeq" id="WP_012573149.1">
    <property type="nucleotide sequence ID" value="NC_011565.1"/>
</dbReference>
<dbReference type="SMR" id="B6YQB6"/>
<dbReference type="STRING" id="511995.CFPG_125"/>
<dbReference type="KEGG" id="aps:CFPG_125"/>
<dbReference type="eggNOG" id="COG0267">
    <property type="taxonomic scope" value="Bacteria"/>
</dbReference>
<dbReference type="HOGENOM" id="CLU_190949_3_0_10"/>
<dbReference type="OrthoDB" id="9801333at2"/>
<dbReference type="Proteomes" id="UP000000723">
    <property type="component" value="Chromosome"/>
</dbReference>
<dbReference type="GO" id="GO:0005737">
    <property type="term" value="C:cytoplasm"/>
    <property type="evidence" value="ECO:0007669"/>
    <property type="project" value="UniProtKB-ARBA"/>
</dbReference>
<dbReference type="GO" id="GO:1990904">
    <property type="term" value="C:ribonucleoprotein complex"/>
    <property type="evidence" value="ECO:0007669"/>
    <property type="project" value="UniProtKB-KW"/>
</dbReference>
<dbReference type="GO" id="GO:0005840">
    <property type="term" value="C:ribosome"/>
    <property type="evidence" value="ECO:0007669"/>
    <property type="project" value="UniProtKB-KW"/>
</dbReference>
<dbReference type="GO" id="GO:0003735">
    <property type="term" value="F:structural constituent of ribosome"/>
    <property type="evidence" value="ECO:0007669"/>
    <property type="project" value="InterPro"/>
</dbReference>
<dbReference type="GO" id="GO:0006412">
    <property type="term" value="P:translation"/>
    <property type="evidence" value="ECO:0007669"/>
    <property type="project" value="UniProtKB-UniRule"/>
</dbReference>
<dbReference type="Gene3D" id="2.20.28.120">
    <property type="entry name" value="Ribosomal protein L33"/>
    <property type="match status" value="1"/>
</dbReference>
<dbReference type="HAMAP" id="MF_00294">
    <property type="entry name" value="Ribosomal_bL33"/>
    <property type="match status" value="1"/>
</dbReference>
<dbReference type="InterPro" id="IPR001705">
    <property type="entry name" value="Ribosomal_bL33"/>
</dbReference>
<dbReference type="InterPro" id="IPR038584">
    <property type="entry name" value="Ribosomal_bL33_sf"/>
</dbReference>
<dbReference type="InterPro" id="IPR011332">
    <property type="entry name" value="Ribosomal_zn-bd"/>
</dbReference>
<dbReference type="NCBIfam" id="NF001764">
    <property type="entry name" value="PRK00504.1"/>
    <property type="match status" value="1"/>
</dbReference>
<dbReference type="NCBIfam" id="NF001860">
    <property type="entry name" value="PRK00595.1"/>
    <property type="match status" value="1"/>
</dbReference>
<dbReference type="NCBIfam" id="TIGR01023">
    <property type="entry name" value="rpmG_bact"/>
    <property type="match status" value="1"/>
</dbReference>
<dbReference type="PANTHER" id="PTHR43168">
    <property type="entry name" value="50S RIBOSOMAL PROTEIN L33, CHLOROPLASTIC"/>
    <property type="match status" value="1"/>
</dbReference>
<dbReference type="PANTHER" id="PTHR43168:SF2">
    <property type="entry name" value="LARGE RIBOSOMAL SUBUNIT PROTEIN BL33C"/>
    <property type="match status" value="1"/>
</dbReference>
<dbReference type="Pfam" id="PF00471">
    <property type="entry name" value="Ribosomal_L33"/>
    <property type="match status" value="1"/>
</dbReference>
<dbReference type="SUPFAM" id="SSF57829">
    <property type="entry name" value="Zn-binding ribosomal proteins"/>
    <property type="match status" value="1"/>
</dbReference>
<proteinExistence type="inferred from homology"/>
<accession>B6YQB6</accession>
<organism>
    <name type="scientific">Azobacteroides pseudotrichonymphae genomovar. CFP2</name>
    <dbReference type="NCBI Taxonomy" id="511995"/>
    <lineage>
        <taxon>Bacteria</taxon>
        <taxon>Pseudomonadati</taxon>
        <taxon>Bacteroidota</taxon>
        <taxon>Bacteroidia</taxon>
        <taxon>Bacteroidales</taxon>
        <taxon>Candidatus Azobacteroides</taxon>
    </lineage>
</organism>
<keyword id="KW-1185">Reference proteome</keyword>
<keyword id="KW-0687">Ribonucleoprotein</keyword>
<keyword id="KW-0689">Ribosomal protein</keyword>
<sequence>MAKKVKGNRVQVVLECAEHKESGLPGTSRYITTKNKKNTTTRLELKKYNPILKKMTLHKEIK</sequence>